<accession>B7NGB2</accession>
<proteinExistence type="inferred from homology"/>
<reference key="1">
    <citation type="journal article" date="2009" name="PLoS Genet.">
        <title>Organised genome dynamics in the Escherichia coli species results in highly diverse adaptive paths.</title>
        <authorList>
            <person name="Touchon M."/>
            <person name="Hoede C."/>
            <person name="Tenaillon O."/>
            <person name="Barbe V."/>
            <person name="Baeriswyl S."/>
            <person name="Bidet P."/>
            <person name="Bingen E."/>
            <person name="Bonacorsi S."/>
            <person name="Bouchier C."/>
            <person name="Bouvet O."/>
            <person name="Calteau A."/>
            <person name="Chiapello H."/>
            <person name="Clermont O."/>
            <person name="Cruveiller S."/>
            <person name="Danchin A."/>
            <person name="Diard M."/>
            <person name="Dossat C."/>
            <person name="Karoui M.E."/>
            <person name="Frapy E."/>
            <person name="Garry L."/>
            <person name="Ghigo J.M."/>
            <person name="Gilles A.M."/>
            <person name="Johnson J."/>
            <person name="Le Bouguenec C."/>
            <person name="Lescat M."/>
            <person name="Mangenot S."/>
            <person name="Martinez-Jehanne V."/>
            <person name="Matic I."/>
            <person name="Nassif X."/>
            <person name="Oztas S."/>
            <person name="Petit M.A."/>
            <person name="Pichon C."/>
            <person name="Rouy Z."/>
            <person name="Ruf C.S."/>
            <person name="Schneider D."/>
            <person name="Tourret J."/>
            <person name="Vacherie B."/>
            <person name="Vallenet D."/>
            <person name="Medigue C."/>
            <person name="Rocha E.P.C."/>
            <person name="Denamur E."/>
        </authorList>
    </citation>
    <scope>NUCLEOTIDE SEQUENCE [LARGE SCALE GENOMIC DNA]</scope>
    <source>
        <strain>UMN026 / ExPEC</strain>
    </source>
</reference>
<organism>
    <name type="scientific">Escherichia coli O17:K52:H18 (strain UMN026 / ExPEC)</name>
    <dbReference type="NCBI Taxonomy" id="585056"/>
    <lineage>
        <taxon>Bacteria</taxon>
        <taxon>Pseudomonadati</taxon>
        <taxon>Pseudomonadota</taxon>
        <taxon>Gammaproteobacteria</taxon>
        <taxon>Enterobacterales</taxon>
        <taxon>Enterobacteriaceae</taxon>
        <taxon>Escherichia</taxon>
    </lineage>
</organism>
<sequence length="141" mass="15593">MQLTSFTDYGLRALIYMASLPEGRMTSISEVTDVYGVSRNHMVKIINQLSRAGYVTAVRGKNGGIRLGKPASAIRIGDVVRELEPLSLVNCSSEFCHITPACRLKQALSKAVQSFLTELDNYTLADLVEENQPLYKLLLVE</sequence>
<name>NSRR_ECOLU</name>
<evidence type="ECO:0000255" key="1">
    <source>
        <dbReference type="HAMAP-Rule" id="MF_01177"/>
    </source>
</evidence>
<protein>
    <recommendedName>
        <fullName evidence="1">HTH-type transcriptional repressor NsrR</fullName>
    </recommendedName>
</protein>
<feature type="chain" id="PRO_1000138120" description="HTH-type transcriptional repressor NsrR">
    <location>
        <begin position="1"/>
        <end position="141"/>
    </location>
</feature>
<feature type="domain" description="HTH rrf2-type" evidence="1">
    <location>
        <begin position="2"/>
        <end position="129"/>
    </location>
</feature>
<feature type="DNA-binding region" description="H-T-H motif" evidence="1">
    <location>
        <begin position="28"/>
        <end position="51"/>
    </location>
</feature>
<feature type="binding site" evidence="1">
    <location>
        <position position="91"/>
    </location>
    <ligand>
        <name>[2Fe-2S] cluster</name>
        <dbReference type="ChEBI" id="CHEBI:190135"/>
    </ligand>
</feature>
<feature type="binding site" evidence="1">
    <location>
        <position position="96"/>
    </location>
    <ligand>
        <name>[2Fe-2S] cluster</name>
        <dbReference type="ChEBI" id="CHEBI:190135"/>
    </ligand>
</feature>
<feature type="binding site" evidence="1">
    <location>
        <position position="102"/>
    </location>
    <ligand>
        <name>[2Fe-2S] cluster</name>
        <dbReference type="ChEBI" id="CHEBI:190135"/>
    </ligand>
</feature>
<comment type="function">
    <text evidence="1">Nitric oxide-sensitive repressor of genes involved in protecting the cell against nitrosative stress. May require iron for activity.</text>
</comment>
<comment type="cofactor">
    <cofactor evidence="1">
        <name>[2Fe-2S] cluster</name>
        <dbReference type="ChEBI" id="CHEBI:190135"/>
    </cofactor>
    <text evidence="1">Binds 1 [2Fe-2S] cluster per subunit.</text>
</comment>
<keyword id="KW-0001">2Fe-2S</keyword>
<keyword id="KW-0238">DNA-binding</keyword>
<keyword id="KW-0408">Iron</keyword>
<keyword id="KW-0411">Iron-sulfur</keyword>
<keyword id="KW-0479">Metal-binding</keyword>
<keyword id="KW-0678">Repressor</keyword>
<keyword id="KW-0804">Transcription</keyword>
<keyword id="KW-0805">Transcription regulation</keyword>
<gene>
    <name evidence="1" type="primary">nsrR</name>
    <name type="ordered locus">ECUMN_4711</name>
</gene>
<dbReference type="EMBL" id="CU928163">
    <property type="protein sequence ID" value="CAR15824.1"/>
    <property type="molecule type" value="Genomic_DNA"/>
</dbReference>
<dbReference type="RefSeq" id="WP_001177639.1">
    <property type="nucleotide sequence ID" value="NC_011751.1"/>
</dbReference>
<dbReference type="RefSeq" id="YP_002415308.1">
    <property type="nucleotide sequence ID" value="NC_011751.1"/>
</dbReference>
<dbReference type="SMR" id="B7NGB2"/>
<dbReference type="STRING" id="585056.ECUMN_4711"/>
<dbReference type="GeneID" id="93777643"/>
<dbReference type="KEGG" id="eum:ECUMN_4711"/>
<dbReference type="PATRIC" id="fig|585056.7.peg.4874"/>
<dbReference type="HOGENOM" id="CLU_107144_2_1_6"/>
<dbReference type="Proteomes" id="UP000007097">
    <property type="component" value="Chromosome"/>
</dbReference>
<dbReference type="GO" id="GO:0005829">
    <property type="term" value="C:cytosol"/>
    <property type="evidence" value="ECO:0007669"/>
    <property type="project" value="TreeGrafter"/>
</dbReference>
<dbReference type="GO" id="GO:0051537">
    <property type="term" value="F:2 iron, 2 sulfur cluster binding"/>
    <property type="evidence" value="ECO:0007669"/>
    <property type="project" value="UniProtKB-KW"/>
</dbReference>
<dbReference type="GO" id="GO:0003700">
    <property type="term" value="F:DNA-binding transcription factor activity"/>
    <property type="evidence" value="ECO:0007669"/>
    <property type="project" value="UniProtKB-UniRule"/>
</dbReference>
<dbReference type="GO" id="GO:0003690">
    <property type="term" value="F:double-stranded DNA binding"/>
    <property type="evidence" value="ECO:0007669"/>
    <property type="project" value="UniProtKB-UniRule"/>
</dbReference>
<dbReference type="GO" id="GO:0005506">
    <property type="term" value="F:iron ion binding"/>
    <property type="evidence" value="ECO:0007669"/>
    <property type="project" value="UniProtKB-UniRule"/>
</dbReference>
<dbReference type="GO" id="GO:0045892">
    <property type="term" value="P:negative regulation of DNA-templated transcription"/>
    <property type="evidence" value="ECO:0007669"/>
    <property type="project" value="InterPro"/>
</dbReference>
<dbReference type="FunFam" id="1.10.10.10:FF:000105">
    <property type="entry name" value="HTH-type transcriptional repressor NsrR"/>
    <property type="match status" value="1"/>
</dbReference>
<dbReference type="Gene3D" id="1.10.10.10">
    <property type="entry name" value="Winged helix-like DNA-binding domain superfamily/Winged helix DNA-binding domain"/>
    <property type="match status" value="1"/>
</dbReference>
<dbReference type="HAMAP" id="MF_01177">
    <property type="entry name" value="HTH_type_NsrR"/>
    <property type="match status" value="1"/>
</dbReference>
<dbReference type="InterPro" id="IPR030489">
    <property type="entry name" value="TR_Rrf2-type_CS"/>
</dbReference>
<dbReference type="InterPro" id="IPR000944">
    <property type="entry name" value="Tscrpt_reg_Rrf2"/>
</dbReference>
<dbReference type="InterPro" id="IPR023761">
    <property type="entry name" value="Tscrpt_rep_HTH_NsrR"/>
</dbReference>
<dbReference type="InterPro" id="IPR036388">
    <property type="entry name" value="WH-like_DNA-bd_sf"/>
</dbReference>
<dbReference type="InterPro" id="IPR036390">
    <property type="entry name" value="WH_DNA-bd_sf"/>
</dbReference>
<dbReference type="NCBIfam" id="NF008240">
    <property type="entry name" value="PRK11014.1"/>
    <property type="match status" value="1"/>
</dbReference>
<dbReference type="NCBIfam" id="TIGR00738">
    <property type="entry name" value="rrf2_super"/>
    <property type="match status" value="1"/>
</dbReference>
<dbReference type="PANTHER" id="PTHR33221:SF4">
    <property type="entry name" value="HTH-TYPE TRANSCRIPTIONAL REPRESSOR NSRR"/>
    <property type="match status" value="1"/>
</dbReference>
<dbReference type="PANTHER" id="PTHR33221">
    <property type="entry name" value="WINGED HELIX-TURN-HELIX TRANSCRIPTIONAL REGULATOR, RRF2 FAMILY"/>
    <property type="match status" value="1"/>
</dbReference>
<dbReference type="Pfam" id="PF02082">
    <property type="entry name" value="Rrf2"/>
    <property type="match status" value="1"/>
</dbReference>
<dbReference type="SUPFAM" id="SSF46785">
    <property type="entry name" value="Winged helix' DNA-binding domain"/>
    <property type="match status" value="1"/>
</dbReference>
<dbReference type="PROSITE" id="PS01332">
    <property type="entry name" value="HTH_RRF2_1"/>
    <property type="match status" value="1"/>
</dbReference>
<dbReference type="PROSITE" id="PS51197">
    <property type="entry name" value="HTH_RRF2_2"/>
    <property type="match status" value="1"/>
</dbReference>